<name>TRMD_ECOSE</name>
<protein>
    <recommendedName>
        <fullName evidence="1">tRNA (guanine-N(1)-)-methyltransferase</fullName>
        <ecNumber evidence="1">2.1.1.228</ecNumber>
    </recommendedName>
    <alternativeName>
        <fullName evidence="1">M1G-methyltransferase</fullName>
    </alternativeName>
    <alternativeName>
        <fullName evidence="1">tRNA [GM37] methyltransferase</fullName>
    </alternativeName>
</protein>
<comment type="function">
    <text evidence="1">Specifically methylates guanosine-37 in various tRNAs.</text>
</comment>
<comment type="catalytic activity">
    <reaction evidence="1">
        <text>guanosine(37) in tRNA + S-adenosyl-L-methionine = N(1)-methylguanosine(37) in tRNA + S-adenosyl-L-homocysteine + H(+)</text>
        <dbReference type="Rhea" id="RHEA:36899"/>
        <dbReference type="Rhea" id="RHEA-COMP:10145"/>
        <dbReference type="Rhea" id="RHEA-COMP:10147"/>
        <dbReference type="ChEBI" id="CHEBI:15378"/>
        <dbReference type="ChEBI" id="CHEBI:57856"/>
        <dbReference type="ChEBI" id="CHEBI:59789"/>
        <dbReference type="ChEBI" id="CHEBI:73542"/>
        <dbReference type="ChEBI" id="CHEBI:74269"/>
        <dbReference type="EC" id="2.1.1.228"/>
    </reaction>
</comment>
<comment type="subunit">
    <text evidence="1">Homodimer.</text>
</comment>
<comment type="subcellular location">
    <subcellularLocation>
        <location evidence="1">Cytoplasm</location>
    </subcellularLocation>
</comment>
<comment type="similarity">
    <text evidence="1">Belongs to the RNA methyltransferase TrmD family.</text>
</comment>
<proteinExistence type="inferred from homology"/>
<feature type="chain" id="PRO_1000130169" description="tRNA (guanine-N(1)-)-methyltransferase">
    <location>
        <begin position="1"/>
        <end position="255"/>
    </location>
</feature>
<feature type="binding site" evidence="1">
    <location>
        <position position="113"/>
    </location>
    <ligand>
        <name>S-adenosyl-L-methionine</name>
        <dbReference type="ChEBI" id="CHEBI:59789"/>
    </ligand>
</feature>
<feature type="binding site" evidence="1">
    <location>
        <begin position="133"/>
        <end position="138"/>
    </location>
    <ligand>
        <name>S-adenosyl-L-methionine</name>
        <dbReference type="ChEBI" id="CHEBI:59789"/>
    </ligand>
</feature>
<sequence length="255" mass="28422">MWIGIISLFPEMFRAITDYGVTGRAVKNGLLSIQSWSPRDFTHDRHRTVDDRPYGGGPGMLMMVQPLRDAIHAAKAAAGEGAKVIYLSPQGRKLDQAGVSELATNQKLILVCGRYEGIDERVIQTEIDEEWSIGDYVLSGGELPAMTLIDSVSRFIPGVLGHEASATEDSFAEGLLDCPHYTRPEVLEGMEVPPVLLSGNHAEIRRWRLKQSLGRTWLRRPELLENLALTEEQARLLAEFKTEHAQQQHKHDGMA</sequence>
<gene>
    <name evidence="1" type="primary">trmD</name>
    <name type="ordered locus">ECSE_2891</name>
</gene>
<reference key="1">
    <citation type="journal article" date="2008" name="DNA Res.">
        <title>Complete genome sequence and comparative analysis of the wild-type commensal Escherichia coli strain SE11 isolated from a healthy adult.</title>
        <authorList>
            <person name="Oshima K."/>
            <person name="Toh H."/>
            <person name="Ogura Y."/>
            <person name="Sasamoto H."/>
            <person name="Morita H."/>
            <person name="Park S.-H."/>
            <person name="Ooka T."/>
            <person name="Iyoda S."/>
            <person name="Taylor T.D."/>
            <person name="Hayashi T."/>
            <person name="Itoh K."/>
            <person name="Hattori M."/>
        </authorList>
    </citation>
    <scope>NUCLEOTIDE SEQUENCE [LARGE SCALE GENOMIC DNA]</scope>
    <source>
        <strain>SE11</strain>
    </source>
</reference>
<evidence type="ECO:0000255" key="1">
    <source>
        <dbReference type="HAMAP-Rule" id="MF_00605"/>
    </source>
</evidence>
<dbReference type="EC" id="2.1.1.228" evidence="1"/>
<dbReference type="EMBL" id="AP009240">
    <property type="protein sequence ID" value="BAG78415.1"/>
    <property type="molecule type" value="Genomic_DNA"/>
</dbReference>
<dbReference type="RefSeq" id="WP_000264777.1">
    <property type="nucleotide sequence ID" value="NC_011415.1"/>
</dbReference>
<dbReference type="SMR" id="B6I629"/>
<dbReference type="GeneID" id="93774457"/>
<dbReference type="KEGG" id="ecy:ECSE_2891"/>
<dbReference type="HOGENOM" id="CLU_047363_0_1_6"/>
<dbReference type="Proteomes" id="UP000008199">
    <property type="component" value="Chromosome"/>
</dbReference>
<dbReference type="GO" id="GO:0005829">
    <property type="term" value="C:cytosol"/>
    <property type="evidence" value="ECO:0007669"/>
    <property type="project" value="TreeGrafter"/>
</dbReference>
<dbReference type="GO" id="GO:0052906">
    <property type="term" value="F:tRNA (guanine(37)-N1)-methyltransferase activity"/>
    <property type="evidence" value="ECO:0007669"/>
    <property type="project" value="UniProtKB-UniRule"/>
</dbReference>
<dbReference type="GO" id="GO:0002939">
    <property type="term" value="P:tRNA N1-guanine methylation"/>
    <property type="evidence" value="ECO:0007669"/>
    <property type="project" value="TreeGrafter"/>
</dbReference>
<dbReference type="CDD" id="cd18080">
    <property type="entry name" value="TrmD-like"/>
    <property type="match status" value="1"/>
</dbReference>
<dbReference type="FunFam" id="1.10.1270.20:FF:000001">
    <property type="entry name" value="tRNA (guanine-N(1)-)-methyltransferase"/>
    <property type="match status" value="1"/>
</dbReference>
<dbReference type="FunFam" id="3.40.1280.10:FF:000001">
    <property type="entry name" value="tRNA (guanine-N(1)-)-methyltransferase"/>
    <property type="match status" value="1"/>
</dbReference>
<dbReference type="Gene3D" id="3.40.1280.10">
    <property type="match status" value="1"/>
</dbReference>
<dbReference type="Gene3D" id="1.10.1270.20">
    <property type="entry name" value="tRNA(m1g37)methyltransferase, domain 2"/>
    <property type="match status" value="1"/>
</dbReference>
<dbReference type="HAMAP" id="MF_00605">
    <property type="entry name" value="TrmD"/>
    <property type="match status" value="1"/>
</dbReference>
<dbReference type="InterPro" id="IPR029028">
    <property type="entry name" value="Alpha/beta_knot_MTases"/>
</dbReference>
<dbReference type="InterPro" id="IPR023148">
    <property type="entry name" value="tRNA_m1G_MeTrfase_C_sf"/>
</dbReference>
<dbReference type="InterPro" id="IPR002649">
    <property type="entry name" value="tRNA_m1G_MeTrfase_TrmD"/>
</dbReference>
<dbReference type="InterPro" id="IPR029026">
    <property type="entry name" value="tRNA_m1G_MTases_N"/>
</dbReference>
<dbReference type="InterPro" id="IPR016009">
    <property type="entry name" value="tRNA_MeTrfase_TRMD/TRM10"/>
</dbReference>
<dbReference type="NCBIfam" id="NF000648">
    <property type="entry name" value="PRK00026.1"/>
    <property type="match status" value="1"/>
</dbReference>
<dbReference type="NCBIfam" id="TIGR00088">
    <property type="entry name" value="trmD"/>
    <property type="match status" value="1"/>
</dbReference>
<dbReference type="PANTHER" id="PTHR46417">
    <property type="entry name" value="TRNA (GUANINE-N(1)-)-METHYLTRANSFERASE"/>
    <property type="match status" value="1"/>
</dbReference>
<dbReference type="PANTHER" id="PTHR46417:SF1">
    <property type="entry name" value="TRNA (GUANINE-N(1)-)-METHYLTRANSFERASE"/>
    <property type="match status" value="1"/>
</dbReference>
<dbReference type="Pfam" id="PF01746">
    <property type="entry name" value="tRNA_m1G_MT"/>
    <property type="match status" value="1"/>
</dbReference>
<dbReference type="PIRSF" id="PIRSF000386">
    <property type="entry name" value="tRNA_mtase"/>
    <property type="match status" value="1"/>
</dbReference>
<dbReference type="SUPFAM" id="SSF75217">
    <property type="entry name" value="alpha/beta knot"/>
    <property type="match status" value="1"/>
</dbReference>
<accession>B6I629</accession>
<organism>
    <name type="scientific">Escherichia coli (strain SE11)</name>
    <dbReference type="NCBI Taxonomy" id="409438"/>
    <lineage>
        <taxon>Bacteria</taxon>
        <taxon>Pseudomonadati</taxon>
        <taxon>Pseudomonadota</taxon>
        <taxon>Gammaproteobacteria</taxon>
        <taxon>Enterobacterales</taxon>
        <taxon>Enterobacteriaceae</taxon>
        <taxon>Escherichia</taxon>
    </lineage>
</organism>
<keyword id="KW-0963">Cytoplasm</keyword>
<keyword id="KW-0489">Methyltransferase</keyword>
<keyword id="KW-0949">S-adenosyl-L-methionine</keyword>
<keyword id="KW-0808">Transferase</keyword>
<keyword id="KW-0819">tRNA processing</keyword>